<dbReference type="EC" id="1.17.7.3" evidence="1"/>
<dbReference type="EMBL" id="CP000521">
    <property type="protein sequence ID" value="ABO10955.2"/>
    <property type="molecule type" value="Genomic_DNA"/>
</dbReference>
<dbReference type="RefSeq" id="WP_000572095.1">
    <property type="nucleotide sequence ID" value="NZ_CP053098.1"/>
</dbReference>
<dbReference type="SMR" id="A3M211"/>
<dbReference type="GeneID" id="92892505"/>
<dbReference type="KEGG" id="acb:A1S_0502"/>
<dbReference type="HOGENOM" id="CLU_042258_0_0_6"/>
<dbReference type="UniPathway" id="UPA00056">
    <property type="reaction ID" value="UER00096"/>
</dbReference>
<dbReference type="GO" id="GO:0051539">
    <property type="term" value="F:4 iron, 4 sulfur cluster binding"/>
    <property type="evidence" value="ECO:0007669"/>
    <property type="project" value="UniProtKB-UniRule"/>
</dbReference>
<dbReference type="GO" id="GO:0046429">
    <property type="term" value="F:4-hydroxy-3-methylbut-2-en-1-yl diphosphate synthase activity (ferredoxin)"/>
    <property type="evidence" value="ECO:0007669"/>
    <property type="project" value="UniProtKB-UniRule"/>
</dbReference>
<dbReference type="GO" id="GO:0141197">
    <property type="term" value="F:4-hydroxy-3-methylbut-2-enyl-diphosphate synthase activity (flavodoxin)"/>
    <property type="evidence" value="ECO:0007669"/>
    <property type="project" value="UniProtKB-EC"/>
</dbReference>
<dbReference type="GO" id="GO:0005506">
    <property type="term" value="F:iron ion binding"/>
    <property type="evidence" value="ECO:0007669"/>
    <property type="project" value="InterPro"/>
</dbReference>
<dbReference type="GO" id="GO:0019288">
    <property type="term" value="P:isopentenyl diphosphate biosynthetic process, methylerythritol 4-phosphate pathway"/>
    <property type="evidence" value="ECO:0007669"/>
    <property type="project" value="UniProtKB-UniRule"/>
</dbReference>
<dbReference type="GO" id="GO:0016114">
    <property type="term" value="P:terpenoid biosynthetic process"/>
    <property type="evidence" value="ECO:0007669"/>
    <property type="project" value="InterPro"/>
</dbReference>
<dbReference type="FunFam" id="3.20.20.20:FF:000001">
    <property type="entry name" value="4-hydroxy-3-methylbut-2-en-1-yl diphosphate synthase (flavodoxin)"/>
    <property type="match status" value="1"/>
</dbReference>
<dbReference type="Gene3D" id="3.20.20.20">
    <property type="entry name" value="Dihydropteroate synthase-like"/>
    <property type="match status" value="1"/>
</dbReference>
<dbReference type="Gene3D" id="3.30.413.10">
    <property type="entry name" value="Sulfite Reductase Hemoprotein, domain 1"/>
    <property type="match status" value="1"/>
</dbReference>
<dbReference type="HAMAP" id="MF_00159">
    <property type="entry name" value="IspG"/>
    <property type="match status" value="1"/>
</dbReference>
<dbReference type="InterPro" id="IPR011005">
    <property type="entry name" value="Dihydropteroate_synth-like_sf"/>
</dbReference>
<dbReference type="InterPro" id="IPR016425">
    <property type="entry name" value="IspG_bac"/>
</dbReference>
<dbReference type="InterPro" id="IPR004588">
    <property type="entry name" value="IspG_bac-typ"/>
</dbReference>
<dbReference type="InterPro" id="IPR045854">
    <property type="entry name" value="NO2/SO3_Rdtase_4Fe4S_sf"/>
</dbReference>
<dbReference type="NCBIfam" id="TIGR00612">
    <property type="entry name" value="ispG_gcpE"/>
    <property type="match status" value="1"/>
</dbReference>
<dbReference type="NCBIfam" id="NF001540">
    <property type="entry name" value="PRK00366.1"/>
    <property type="match status" value="1"/>
</dbReference>
<dbReference type="PANTHER" id="PTHR30454">
    <property type="entry name" value="4-HYDROXY-3-METHYLBUT-2-EN-1-YL DIPHOSPHATE SYNTHASE"/>
    <property type="match status" value="1"/>
</dbReference>
<dbReference type="PANTHER" id="PTHR30454:SF0">
    <property type="entry name" value="4-HYDROXY-3-METHYLBUT-2-EN-1-YL DIPHOSPHATE SYNTHASE (FERREDOXIN), CHLOROPLASTIC"/>
    <property type="match status" value="1"/>
</dbReference>
<dbReference type="Pfam" id="PF04551">
    <property type="entry name" value="GcpE"/>
    <property type="match status" value="1"/>
</dbReference>
<dbReference type="PIRSF" id="PIRSF004640">
    <property type="entry name" value="IspG"/>
    <property type="match status" value="1"/>
</dbReference>
<dbReference type="SUPFAM" id="SSF51717">
    <property type="entry name" value="Dihydropteroate synthetase-like"/>
    <property type="match status" value="1"/>
</dbReference>
<dbReference type="SUPFAM" id="SSF56014">
    <property type="entry name" value="Nitrite and sulphite reductase 4Fe-4S domain-like"/>
    <property type="match status" value="1"/>
</dbReference>
<keyword id="KW-0004">4Fe-4S</keyword>
<keyword id="KW-0408">Iron</keyword>
<keyword id="KW-0411">Iron-sulfur</keyword>
<keyword id="KW-0414">Isoprene biosynthesis</keyword>
<keyword id="KW-0479">Metal-binding</keyword>
<keyword id="KW-0560">Oxidoreductase</keyword>
<gene>
    <name evidence="1" type="primary">ispG</name>
    <name type="ordered locus">A1S_0502</name>
</gene>
<feature type="chain" id="PRO_1000097139" description="4-hydroxy-3-methylbut-2-en-1-yl diphosphate synthase (flavodoxin)">
    <location>
        <begin position="1"/>
        <end position="371"/>
    </location>
</feature>
<feature type="binding site" evidence="1">
    <location>
        <position position="269"/>
    </location>
    <ligand>
        <name>[4Fe-4S] cluster</name>
        <dbReference type="ChEBI" id="CHEBI:49883"/>
    </ligand>
</feature>
<feature type="binding site" evidence="1">
    <location>
        <position position="272"/>
    </location>
    <ligand>
        <name>[4Fe-4S] cluster</name>
        <dbReference type="ChEBI" id="CHEBI:49883"/>
    </ligand>
</feature>
<feature type="binding site" evidence="1">
    <location>
        <position position="304"/>
    </location>
    <ligand>
        <name>[4Fe-4S] cluster</name>
        <dbReference type="ChEBI" id="CHEBI:49883"/>
    </ligand>
</feature>
<feature type="binding site" evidence="1">
    <location>
        <position position="311"/>
    </location>
    <ligand>
        <name>[4Fe-4S] cluster</name>
        <dbReference type="ChEBI" id="CHEBI:49883"/>
    </ligand>
</feature>
<comment type="function">
    <text evidence="1">Converts 2C-methyl-D-erythritol 2,4-cyclodiphosphate (ME-2,4cPP) into 1-hydroxy-2-methyl-2-(E)-butenyl 4-diphosphate.</text>
</comment>
<comment type="catalytic activity">
    <reaction evidence="1">
        <text>(2E)-4-hydroxy-3-methylbut-2-enyl diphosphate + oxidized [flavodoxin] + H2O + 2 H(+) = 2-C-methyl-D-erythritol 2,4-cyclic diphosphate + reduced [flavodoxin]</text>
        <dbReference type="Rhea" id="RHEA:43604"/>
        <dbReference type="Rhea" id="RHEA-COMP:10622"/>
        <dbReference type="Rhea" id="RHEA-COMP:10623"/>
        <dbReference type="ChEBI" id="CHEBI:15377"/>
        <dbReference type="ChEBI" id="CHEBI:15378"/>
        <dbReference type="ChEBI" id="CHEBI:57618"/>
        <dbReference type="ChEBI" id="CHEBI:58210"/>
        <dbReference type="ChEBI" id="CHEBI:58483"/>
        <dbReference type="ChEBI" id="CHEBI:128753"/>
        <dbReference type="EC" id="1.17.7.3"/>
    </reaction>
</comment>
<comment type="cofactor">
    <cofactor evidence="1">
        <name>[4Fe-4S] cluster</name>
        <dbReference type="ChEBI" id="CHEBI:49883"/>
    </cofactor>
    <text evidence="1">Binds 1 [4Fe-4S] cluster.</text>
</comment>
<comment type="pathway">
    <text evidence="1">Isoprenoid biosynthesis; isopentenyl diphosphate biosynthesis via DXP pathway; isopentenyl diphosphate from 1-deoxy-D-xylulose 5-phosphate: step 5/6.</text>
</comment>
<comment type="similarity">
    <text evidence="1">Belongs to the IspG family.</text>
</comment>
<reference key="1">
    <citation type="journal article" date="2007" name="Genes Dev.">
        <title>New insights into Acinetobacter baumannii pathogenesis revealed by high-density pyrosequencing and transposon mutagenesis.</title>
        <authorList>
            <person name="Smith M.G."/>
            <person name="Gianoulis T.A."/>
            <person name="Pukatzki S."/>
            <person name="Mekalanos J.J."/>
            <person name="Ornston L.N."/>
            <person name="Gerstein M."/>
            <person name="Snyder M."/>
        </authorList>
    </citation>
    <scope>NUCLEOTIDE SEQUENCE [LARGE SCALE GENOMIC DNA]</scope>
    <source>
        <strain>ATCC 17978 / DSM 105126 / CIP 53.77 / LMG 1025 / NCDC KC755 / 5377</strain>
    </source>
</reference>
<protein>
    <recommendedName>
        <fullName evidence="1">4-hydroxy-3-methylbut-2-en-1-yl diphosphate synthase (flavodoxin)</fullName>
        <ecNumber evidence="1">1.17.7.3</ecNumber>
    </recommendedName>
    <alternativeName>
        <fullName evidence="1">1-hydroxy-2-methyl-2-(E)-butenyl 4-diphosphate synthase</fullName>
    </alternativeName>
</protein>
<evidence type="ECO:0000255" key="1">
    <source>
        <dbReference type="HAMAP-Rule" id="MF_00159"/>
    </source>
</evidence>
<name>ISPG_ACIBT</name>
<accession>A3M211</accession>
<sequence length="371" mass="40443">MIENPIKRRPTRKIRVGSVYVGGDAPISVQSMTNTETCDVDATVAQIERCVDAGADIMRVSVPSMEAAEAFGAIRKRVSVPLVADIHFDHRIALAVADYGADCLRINPGNIGSDQKVREVVAAARHHGISMRIGVNAGSLEKDLQKKYGEPTGQALLESALRHIDILDRLDFHEFKVSVKASNVFLTMDAYRLLSQQIDNPLHLGVTEAGIYRTGTVKSAIALGGLLMEGIGDTMRISLAAEPEDEIKIGFDILKSLGLRSNGINFIACPSCSRQEFNVIQVMQALEERLEDIRTPMDVSVIGCKVNGPGEAKEADIGVVGAAPRSLVYRNGEKSHLIDTNQLVDEIETMVRQRVQELEEAKSKEIIRSSS</sequence>
<proteinExistence type="inferred from homology"/>
<organism>
    <name type="scientific">Acinetobacter baumannii (strain ATCC 17978 / DSM 105126 / CIP 53.77 / LMG 1025 / NCDC KC755 / 5377)</name>
    <dbReference type="NCBI Taxonomy" id="400667"/>
    <lineage>
        <taxon>Bacteria</taxon>
        <taxon>Pseudomonadati</taxon>
        <taxon>Pseudomonadota</taxon>
        <taxon>Gammaproteobacteria</taxon>
        <taxon>Moraxellales</taxon>
        <taxon>Moraxellaceae</taxon>
        <taxon>Acinetobacter</taxon>
        <taxon>Acinetobacter calcoaceticus/baumannii complex</taxon>
    </lineage>
</organism>